<gene>
    <name type="primary">Rtp1</name>
    <name type="synonym">Gm604</name>
</gene>
<comment type="function">
    <text evidence="2">Specifically promotes functional cell surface expression of olfactory receptors, but not of other GPCRs.</text>
</comment>
<comment type="subunit">
    <text evidence="2">Interacts with olfactory receptors.</text>
</comment>
<comment type="subcellular location">
    <subcellularLocation>
        <location evidence="2">Cell membrane</location>
        <topology evidence="2">Single-pass type III membrane protein</topology>
    </subcellularLocation>
    <text>Effective cell surface expression depends upon interaction with olfactory receptors.</text>
</comment>
<comment type="tissue specificity">
    <text evidence="2">Predominantly expressed in olfactory and vomeronasal organs, in mature olfactory sensory neurons.</text>
</comment>
<comment type="similarity">
    <text evidence="3">Belongs to the TMEM7 family.</text>
</comment>
<accession>Q8C8C1</accession>
<protein>
    <recommendedName>
        <fullName>Receptor-transporting protein 1</fullName>
    </recommendedName>
</protein>
<organism>
    <name type="scientific">Mus musculus</name>
    <name type="common">Mouse</name>
    <dbReference type="NCBI Taxonomy" id="10090"/>
    <lineage>
        <taxon>Eukaryota</taxon>
        <taxon>Metazoa</taxon>
        <taxon>Chordata</taxon>
        <taxon>Craniata</taxon>
        <taxon>Vertebrata</taxon>
        <taxon>Euteleostomi</taxon>
        <taxon>Mammalia</taxon>
        <taxon>Eutheria</taxon>
        <taxon>Euarchontoglires</taxon>
        <taxon>Glires</taxon>
        <taxon>Rodentia</taxon>
        <taxon>Myomorpha</taxon>
        <taxon>Muroidea</taxon>
        <taxon>Muridae</taxon>
        <taxon>Murinae</taxon>
        <taxon>Mus</taxon>
        <taxon>Mus</taxon>
    </lineage>
</organism>
<keyword id="KW-1003">Cell membrane</keyword>
<keyword id="KW-0472">Membrane</keyword>
<keyword id="KW-0479">Metal-binding</keyword>
<keyword id="KW-1185">Reference proteome</keyword>
<keyword id="KW-0812">Transmembrane</keyword>
<keyword id="KW-1133">Transmembrane helix</keyword>
<keyword id="KW-0862">Zinc</keyword>
<keyword id="KW-0863">Zinc-finger</keyword>
<sequence>MRIFRPWRLRCPALHLPSFPTFSIKCSLPPLPTDEDMCKSVTTGEWKKVFYEKMEEVKPADSWDFIIDPNLKHNVLAPGWKQYLELHASGRFHCSWCWHTWQSPHVVILFHMYLDKAQRAGSVRMRVFKQLCYECGTARLDESSMLEENIESLVDNLITSLREQCYGERGGHYRIHVASRQDNRRHRGEFCEACQEGIVHWKPSEKLLEEEATTYTFSRAPSPTKPQAETGSGCNFCSIPWCLFWATVLMLIIYLQFSFRTSV</sequence>
<evidence type="ECO:0000255" key="1"/>
<evidence type="ECO:0000269" key="2">
    <source>
    </source>
</evidence>
<evidence type="ECO:0000305" key="3"/>
<dbReference type="EMBL" id="AY562225">
    <property type="protein sequence ID" value="AAT70670.1"/>
    <property type="molecule type" value="mRNA"/>
</dbReference>
<dbReference type="EMBL" id="AK047543">
    <property type="protein sequence ID" value="BAC33083.1"/>
    <property type="molecule type" value="mRNA"/>
</dbReference>
<dbReference type="CCDS" id="CCDS28078.1"/>
<dbReference type="RefSeq" id="NP_001004151.1">
    <property type="nucleotide sequence ID" value="NM_001004151.2"/>
</dbReference>
<dbReference type="CORUM" id="Q8C8C1"/>
<dbReference type="FunCoup" id="Q8C8C1">
    <property type="interactions" value="144"/>
</dbReference>
<dbReference type="STRING" id="10090.ENSMUSP00000043416"/>
<dbReference type="PhosphoSitePlus" id="Q8C8C1"/>
<dbReference type="PaxDb" id="10090-ENSMUSP00000043416"/>
<dbReference type="ProteomicsDB" id="260742"/>
<dbReference type="Antibodypedia" id="46840">
    <property type="antibodies" value="93 antibodies from 18 providers"/>
</dbReference>
<dbReference type="DNASU" id="239766"/>
<dbReference type="Ensembl" id="ENSMUST00000038730.7">
    <property type="protein sequence ID" value="ENSMUSP00000043416.7"/>
    <property type="gene ID" value="ENSMUSG00000033383.7"/>
</dbReference>
<dbReference type="GeneID" id="239766"/>
<dbReference type="KEGG" id="mmu:239766"/>
<dbReference type="UCSC" id="uc007ytq.1">
    <property type="organism name" value="mouse"/>
</dbReference>
<dbReference type="AGR" id="MGI:2685450"/>
<dbReference type="CTD" id="132112"/>
<dbReference type="MGI" id="MGI:2685450">
    <property type="gene designation" value="Rtp1"/>
</dbReference>
<dbReference type="VEuPathDB" id="HostDB:ENSMUSG00000033383"/>
<dbReference type="eggNOG" id="ENOG502S1UZ">
    <property type="taxonomic scope" value="Eukaryota"/>
</dbReference>
<dbReference type="GeneTree" id="ENSGT00940000161858"/>
<dbReference type="HOGENOM" id="CLU_092465_0_0_1"/>
<dbReference type="InParanoid" id="Q8C8C1"/>
<dbReference type="OMA" id="WDFIIDP"/>
<dbReference type="OrthoDB" id="9754137at2759"/>
<dbReference type="PhylomeDB" id="Q8C8C1"/>
<dbReference type="TreeFam" id="TF333246"/>
<dbReference type="BioGRID-ORCS" id="239766">
    <property type="hits" value="2 hits in 76 CRISPR screens"/>
</dbReference>
<dbReference type="PRO" id="PR:Q8C8C1"/>
<dbReference type="Proteomes" id="UP000000589">
    <property type="component" value="Chromosome 16"/>
</dbReference>
<dbReference type="RNAct" id="Q8C8C1">
    <property type="molecule type" value="protein"/>
</dbReference>
<dbReference type="Bgee" id="ENSMUSG00000033383">
    <property type="expression patterns" value="Expressed in primary visual cortex and 8 other cell types or tissues"/>
</dbReference>
<dbReference type="ExpressionAtlas" id="Q8C8C1">
    <property type="expression patterns" value="baseline and differential"/>
</dbReference>
<dbReference type="GO" id="GO:0009986">
    <property type="term" value="C:cell surface"/>
    <property type="evidence" value="ECO:0007669"/>
    <property type="project" value="Ensembl"/>
</dbReference>
<dbReference type="GO" id="GO:0005789">
    <property type="term" value="C:endoplasmic reticulum membrane"/>
    <property type="evidence" value="ECO:0000304"/>
    <property type="project" value="Reactome"/>
</dbReference>
<dbReference type="GO" id="GO:0005886">
    <property type="term" value="C:plasma membrane"/>
    <property type="evidence" value="ECO:0000304"/>
    <property type="project" value="Reactome"/>
</dbReference>
<dbReference type="GO" id="GO:0031849">
    <property type="term" value="F:olfactory receptor binding"/>
    <property type="evidence" value="ECO:0007669"/>
    <property type="project" value="Ensembl"/>
</dbReference>
<dbReference type="GO" id="GO:0008270">
    <property type="term" value="F:zinc ion binding"/>
    <property type="evidence" value="ECO:0007669"/>
    <property type="project" value="UniProtKB-KW"/>
</dbReference>
<dbReference type="GO" id="GO:0051205">
    <property type="term" value="P:protein insertion into membrane"/>
    <property type="evidence" value="ECO:0007669"/>
    <property type="project" value="Ensembl"/>
</dbReference>
<dbReference type="InterPro" id="IPR026096">
    <property type="entry name" value="R-trans_p"/>
</dbReference>
<dbReference type="InterPro" id="IPR027377">
    <property type="entry name" value="ZAR1/RTP1-5-like_Znf-3CxxC"/>
</dbReference>
<dbReference type="PANTHER" id="PTHR14402">
    <property type="entry name" value="RECEPTOR TRANSPORTING PROTEIN"/>
    <property type="match status" value="1"/>
</dbReference>
<dbReference type="PANTHER" id="PTHR14402:SF19">
    <property type="entry name" value="RECEPTOR-TRANSPORTING PROTEIN 1"/>
    <property type="match status" value="1"/>
</dbReference>
<dbReference type="Pfam" id="PF13695">
    <property type="entry name" value="Zn_ribbon_3CxxC"/>
    <property type="match status" value="1"/>
</dbReference>
<dbReference type="SMART" id="SM01328">
    <property type="entry name" value="zf-3CxxC"/>
    <property type="match status" value="1"/>
</dbReference>
<reference key="1">
    <citation type="journal article" date="2004" name="Cell">
        <title>RTP family members induce functional expression of mammalian odorant receptors.</title>
        <authorList>
            <person name="Saito H."/>
            <person name="Kubota M."/>
            <person name="Roberts R.W."/>
            <person name="Chi Q."/>
            <person name="Matsunami H."/>
        </authorList>
    </citation>
    <scope>NUCLEOTIDE SEQUENCE [MRNA]</scope>
    <scope>FUNCTION</scope>
    <scope>SUBCELLULAR LOCATION</scope>
    <scope>TISSUE SPECIFICITY</scope>
    <scope>INTERACTION WITH OLFACTORY RECEPTORS</scope>
</reference>
<reference key="2">
    <citation type="journal article" date="2005" name="Science">
        <title>The transcriptional landscape of the mammalian genome.</title>
        <authorList>
            <person name="Carninci P."/>
            <person name="Kasukawa T."/>
            <person name="Katayama S."/>
            <person name="Gough J."/>
            <person name="Frith M.C."/>
            <person name="Maeda N."/>
            <person name="Oyama R."/>
            <person name="Ravasi T."/>
            <person name="Lenhard B."/>
            <person name="Wells C."/>
            <person name="Kodzius R."/>
            <person name="Shimokawa K."/>
            <person name="Bajic V.B."/>
            <person name="Brenner S.E."/>
            <person name="Batalov S."/>
            <person name="Forrest A.R."/>
            <person name="Zavolan M."/>
            <person name="Davis M.J."/>
            <person name="Wilming L.G."/>
            <person name="Aidinis V."/>
            <person name="Allen J.E."/>
            <person name="Ambesi-Impiombato A."/>
            <person name="Apweiler R."/>
            <person name="Aturaliya R.N."/>
            <person name="Bailey T.L."/>
            <person name="Bansal M."/>
            <person name="Baxter L."/>
            <person name="Beisel K.W."/>
            <person name="Bersano T."/>
            <person name="Bono H."/>
            <person name="Chalk A.M."/>
            <person name="Chiu K.P."/>
            <person name="Choudhary V."/>
            <person name="Christoffels A."/>
            <person name="Clutterbuck D.R."/>
            <person name="Crowe M.L."/>
            <person name="Dalla E."/>
            <person name="Dalrymple B.P."/>
            <person name="de Bono B."/>
            <person name="Della Gatta G."/>
            <person name="di Bernardo D."/>
            <person name="Down T."/>
            <person name="Engstrom P."/>
            <person name="Fagiolini M."/>
            <person name="Faulkner G."/>
            <person name="Fletcher C.F."/>
            <person name="Fukushima T."/>
            <person name="Furuno M."/>
            <person name="Futaki S."/>
            <person name="Gariboldi M."/>
            <person name="Georgii-Hemming P."/>
            <person name="Gingeras T.R."/>
            <person name="Gojobori T."/>
            <person name="Green R.E."/>
            <person name="Gustincich S."/>
            <person name="Harbers M."/>
            <person name="Hayashi Y."/>
            <person name="Hensch T.K."/>
            <person name="Hirokawa N."/>
            <person name="Hill D."/>
            <person name="Huminiecki L."/>
            <person name="Iacono M."/>
            <person name="Ikeo K."/>
            <person name="Iwama A."/>
            <person name="Ishikawa T."/>
            <person name="Jakt M."/>
            <person name="Kanapin A."/>
            <person name="Katoh M."/>
            <person name="Kawasawa Y."/>
            <person name="Kelso J."/>
            <person name="Kitamura H."/>
            <person name="Kitano H."/>
            <person name="Kollias G."/>
            <person name="Krishnan S.P."/>
            <person name="Kruger A."/>
            <person name="Kummerfeld S.K."/>
            <person name="Kurochkin I.V."/>
            <person name="Lareau L.F."/>
            <person name="Lazarevic D."/>
            <person name="Lipovich L."/>
            <person name="Liu J."/>
            <person name="Liuni S."/>
            <person name="McWilliam S."/>
            <person name="Madan Babu M."/>
            <person name="Madera M."/>
            <person name="Marchionni L."/>
            <person name="Matsuda H."/>
            <person name="Matsuzawa S."/>
            <person name="Miki H."/>
            <person name="Mignone F."/>
            <person name="Miyake S."/>
            <person name="Morris K."/>
            <person name="Mottagui-Tabar S."/>
            <person name="Mulder N."/>
            <person name="Nakano N."/>
            <person name="Nakauchi H."/>
            <person name="Ng P."/>
            <person name="Nilsson R."/>
            <person name="Nishiguchi S."/>
            <person name="Nishikawa S."/>
            <person name="Nori F."/>
            <person name="Ohara O."/>
            <person name="Okazaki Y."/>
            <person name="Orlando V."/>
            <person name="Pang K.C."/>
            <person name="Pavan W.J."/>
            <person name="Pavesi G."/>
            <person name="Pesole G."/>
            <person name="Petrovsky N."/>
            <person name="Piazza S."/>
            <person name="Reed J."/>
            <person name="Reid J.F."/>
            <person name="Ring B.Z."/>
            <person name="Ringwald M."/>
            <person name="Rost B."/>
            <person name="Ruan Y."/>
            <person name="Salzberg S.L."/>
            <person name="Sandelin A."/>
            <person name="Schneider C."/>
            <person name="Schoenbach C."/>
            <person name="Sekiguchi K."/>
            <person name="Semple C.A."/>
            <person name="Seno S."/>
            <person name="Sessa L."/>
            <person name="Sheng Y."/>
            <person name="Shibata Y."/>
            <person name="Shimada H."/>
            <person name="Shimada K."/>
            <person name="Silva D."/>
            <person name="Sinclair B."/>
            <person name="Sperling S."/>
            <person name="Stupka E."/>
            <person name="Sugiura K."/>
            <person name="Sultana R."/>
            <person name="Takenaka Y."/>
            <person name="Taki K."/>
            <person name="Tammoja K."/>
            <person name="Tan S.L."/>
            <person name="Tang S."/>
            <person name="Taylor M.S."/>
            <person name="Tegner J."/>
            <person name="Teichmann S.A."/>
            <person name="Ueda H.R."/>
            <person name="van Nimwegen E."/>
            <person name="Verardo R."/>
            <person name="Wei C.L."/>
            <person name="Yagi K."/>
            <person name="Yamanishi H."/>
            <person name="Zabarovsky E."/>
            <person name="Zhu S."/>
            <person name="Zimmer A."/>
            <person name="Hide W."/>
            <person name="Bult C."/>
            <person name="Grimmond S.M."/>
            <person name="Teasdale R.D."/>
            <person name="Liu E.T."/>
            <person name="Brusic V."/>
            <person name="Quackenbush J."/>
            <person name="Wahlestedt C."/>
            <person name="Mattick J.S."/>
            <person name="Hume D.A."/>
            <person name="Kai C."/>
            <person name="Sasaki D."/>
            <person name="Tomaru Y."/>
            <person name="Fukuda S."/>
            <person name="Kanamori-Katayama M."/>
            <person name="Suzuki M."/>
            <person name="Aoki J."/>
            <person name="Arakawa T."/>
            <person name="Iida J."/>
            <person name="Imamura K."/>
            <person name="Itoh M."/>
            <person name="Kato T."/>
            <person name="Kawaji H."/>
            <person name="Kawagashira N."/>
            <person name="Kawashima T."/>
            <person name="Kojima M."/>
            <person name="Kondo S."/>
            <person name="Konno H."/>
            <person name="Nakano K."/>
            <person name="Ninomiya N."/>
            <person name="Nishio T."/>
            <person name="Okada M."/>
            <person name="Plessy C."/>
            <person name="Shibata K."/>
            <person name="Shiraki T."/>
            <person name="Suzuki S."/>
            <person name="Tagami M."/>
            <person name="Waki K."/>
            <person name="Watahiki A."/>
            <person name="Okamura-Oho Y."/>
            <person name="Suzuki H."/>
            <person name="Kawai J."/>
            <person name="Hayashizaki Y."/>
        </authorList>
    </citation>
    <scope>NUCLEOTIDE SEQUENCE [LARGE SCALE MRNA]</scope>
    <source>
        <strain>C57BL/6J</strain>
        <tissue>Cerebellum</tissue>
    </source>
</reference>
<feature type="chain" id="PRO_0000181990" description="Receptor-transporting protein 1">
    <location>
        <begin position="1"/>
        <end position="263"/>
    </location>
</feature>
<feature type="topological domain" description="Cytoplasmic" evidence="1">
    <location>
        <begin position="1"/>
        <end position="238"/>
    </location>
</feature>
<feature type="transmembrane region" description="Helical" evidence="1">
    <location>
        <begin position="239"/>
        <end position="259"/>
    </location>
</feature>
<feature type="topological domain" description="Extracellular" evidence="1">
    <location>
        <begin position="260"/>
        <end position="263"/>
    </location>
</feature>
<feature type="zinc finger region" description="3CxxC-type" evidence="1">
    <location>
        <begin position="88"/>
        <end position="197"/>
    </location>
</feature>
<name>RTP1_MOUSE</name>
<proteinExistence type="evidence at protein level"/>